<organism>
    <name type="scientific">Shewanella sp. (strain ANA-3)</name>
    <dbReference type="NCBI Taxonomy" id="94122"/>
    <lineage>
        <taxon>Bacteria</taxon>
        <taxon>Pseudomonadati</taxon>
        <taxon>Pseudomonadota</taxon>
        <taxon>Gammaproteobacteria</taxon>
        <taxon>Alteromonadales</taxon>
        <taxon>Shewanellaceae</taxon>
        <taxon>Shewanella</taxon>
    </lineage>
</organism>
<name>RSMJ_SHESA</name>
<reference key="1">
    <citation type="submission" date="2006-09" db="EMBL/GenBank/DDBJ databases">
        <title>Complete sequence of chromosome 1 of Shewanella sp. ANA-3.</title>
        <authorList>
            <person name="Copeland A."/>
            <person name="Lucas S."/>
            <person name="Lapidus A."/>
            <person name="Barry K."/>
            <person name="Detter J.C."/>
            <person name="Glavina del Rio T."/>
            <person name="Hammon N."/>
            <person name="Israni S."/>
            <person name="Dalin E."/>
            <person name="Tice H."/>
            <person name="Pitluck S."/>
            <person name="Chertkov O."/>
            <person name="Brettin T."/>
            <person name="Bruce D."/>
            <person name="Han C."/>
            <person name="Tapia R."/>
            <person name="Gilna P."/>
            <person name="Schmutz J."/>
            <person name="Larimer F."/>
            <person name="Land M."/>
            <person name="Hauser L."/>
            <person name="Kyrpides N."/>
            <person name="Kim E."/>
            <person name="Newman D."/>
            <person name="Salticov C."/>
            <person name="Konstantinidis K."/>
            <person name="Klappenback J."/>
            <person name="Tiedje J."/>
            <person name="Richardson P."/>
        </authorList>
    </citation>
    <scope>NUCLEOTIDE SEQUENCE [LARGE SCALE GENOMIC DNA]</scope>
    <source>
        <strain>ANA-3</strain>
    </source>
</reference>
<evidence type="ECO:0000255" key="1">
    <source>
        <dbReference type="HAMAP-Rule" id="MF_01523"/>
    </source>
</evidence>
<protein>
    <recommendedName>
        <fullName evidence="1">Ribosomal RNA small subunit methyltransferase J</fullName>
        <ecNumber evidence="1">2.1.1.242</ecNumber>
    </recommendedName>
    <alternativeName>
        <fullName evidence="1">16S rRNA m2G1516 methyltransferase</fullName>
    </alternativeName>
    <alternativeName>
        <fullName evidence="1">rRNA (guanine-N(2)-)-methyltransferase</fullName>
    </alternativeName>
</protein>
<comment type="function">
    <text evidence="1">Specifically methylates the guanosine in position 1516 of 16S rRNA.</text>
</comment>
<comment type="catalytic activity">
    <reaction evidence="1">
        <text>guanosine(1516) in 16S rRNA + S-adenosyl-L-methionine = N(2)-methylguanosine(1516) in 16S rRNA + S-adenosyl-L-homocysteine + H(+)</text>
        <dbReference type="Rhea" id="RHEA:43220"/>
        <dbReference type="Rhea" id="RHEA-COMP:10412"/>
        <dbReference type="Rhea" id="RHEA-COMP:10413"/>
        <dbReference type="ChEBI" id="CHEBI:15378"/>
        <dbReference type="ChEBI" id="CHEBI:57856"/>
        <dbReference type="ChEBI" id="CHEBI:59789"/>
        <dbReference type="ChEBI" id="CHEBI:74269"/>
        <dbReference type="ChEBI" id="CHEBI:74481"/>
        <dbReference type="EC" id="2.1.1.242"/>
    </reaction>
</comment>
<comment type="subcellular location">
    <subcellularLocation>
        <location evidence="1">Cytoplasm</location>
    </subcellularLocation>
</comment>
<comment type="similarity">
    <text evidence="1">Belongs to the methyltransferase superfamily. RsmJ family.</text>
</comment>
<accession>A0L2I5</accession>
<keyword id="KW-0963">Cytoplasm</keyword>
<keyword id="KW-0489">Methyltransferase</keyword>
<keyword id="KW-0698">rRNA processing</keyword>
<keyword id="KW-0949">S-adenosyl-L-methionine</keyword>
<keyword id="KW-0808">Transferase</keyword>
<sequence>MAAISTCQTVIPLPIPVFFNQQFPTLVDICARWQLVFDADAPFELRFESDTLTLHKRDEPKLDGIVVDFVTGAVAHRRKFGGGRGQSIAKAVGLKQGVTPKVVDGTAGLGRDAFVLASLGCTVIMVERHPVVAALLEDGLRRAYQDAEIGDWMRERMQLFHGSSLEALAKLEQEVDVVYLDPMYPHRDKSALVKKEMRVFQTLVGADLDADGLLAPAMALASKRVVVKRPDYAEDLAGVKPSMVIETKKNRFDVYVKSAMK</sequence>
<feature type="chain" id="PRO_0000292647" description="Ribosomal RNA small subunit methyltransferase J">
    <location>
        <begin position="1"/>
        <end position="261"/>
    </location>
</feature>
<feature type="binding site" evidence="1">
    <location>
        <begin position="111"/>
        <end position="112"/>
    </location>
    <ligand>
        <name>S-adenosyl-L-methionine</name>
        <dbReference type="ChEBI" id="CHEBI:59789"/>
    </ligand>
</feature>
<feature type="binding site" evidence="1">
    <location>
        <begin position="127"/>
        <end position="128"/>
    </location>
    <ligand>
        <name>S-adenosyl-L-methionine</name>
        <dbReference type="ChEBI" id="CHEBI:59789"/>
    </ligand>
</feature>
<feature type="binding site" evidence="1">
    <location>
        <begin position="163"/>
        <end position="164"/>
    </location>
    <ligand>
        <name>S-adenosyl-L-methionine</name>
        <dbReference type="ChEBI" id="CHEBI:59789"/>
    </ligand>
</feature>
<feature type="binding site" evidence="1">
    <location>
        <position position="181"/>
    </location>
    <ligand>
        <name>S-adenosyl-L-methionine</name>
        <dbReference type="ChEBI" id="CHEBI:59789"/>
    </ligand>
</feature>
<dbReference type="EC" id="2.1.1.242" evidence="1"/>
<dbReference type="EMBL" id="CP000469">
    <property type="protein sequence ID" value="ABK50254.1"/>
    <property type="molecule type" value="Genomic_DNA"/>
</dbReference>
<dbReference type="RefSeq" id="WP_011718751.1">
    <property type="nucleotide sequence ID" value="NC_008577.1"/>
</dbReference>
<dbReference type="SMR" id="A0L2I5"/>
<dbReference type="STRING" id="94122.Shewana3_4037"/>
<dbReference type="KEGG" id="shn:Shewana3_4037"/>
<dbReference type="eggNOG" id="COG0742">
    <property type="taxonomic scope" value="Bacteria"/>
</dbReference>
<dbReference type="HOGENOM" id="CLU_076324_0_0_6"/>
<dbReference type="Proteomes" id="UP000002589">
    <property type="component" value="Chromosome"/>
</dbReference>
<dbReference type="GO" id="GO:0005737">
    <property type="term" value="C:cytoplasm"/>
    <property type="evidence" value="ECO:0007669"/>
    <property type="project" value="UniProtKB-SubCell"/>
</dbReference>
<dbReference type="GO" id="GO:0008990">
    <property type="term" value="F:rRNA (guanine-N2-)-methyltransferase activity"/>
    <property type="evidence" value="ECO:0007669"/>
    <property type="project" value="UniProtKB-UniRule"/>
</dbReference>
<dbReference type="CDD" id="cd02440">
    <property type="entry name" value="AdoMet_MTases"/>
    <property type="match status" value="1"/>
</dbReference>
<dbReference type="Gene3D" id="3.40.50.150">
    <property type="entry name" value="Vaccinia Virus protein VP39"/>
    <property type="match status" value="1"/>
</dbReference>
<dbReference type="Gene3D" id="3.40.1630.10">
    <property type="entry name" value="YhiQ-like domain"/>
    <property type="match status" value="1"/>
</dbReference>
<dbReference type="HAMAP" id="MF_01523">
    <property type="entry name" value="16SrRNA_methyltr_J"/>
    <property type="match status" value="1"/>
</dbReference>
<dbReference type="InterPro" id="IPR007536">
    <property type="entry name" value="16SrRNA_methylTrfase_J"/>
</dbReference>
<dbReference type="InterPro" id="IPR029063">
    <property type="entry name" value="SAM-dependent_MTases_sf"/>
</dbReference>
<dbReference type="PANTHER" id="PTHR36112">
    <property type="entry name" value="RIBOSOMAL RNA SMALL SUBUNIT METHYLTRANSFERASE J"/>
    <property type="match status" value="1"/>
</dbReference>
<dbReference type="PANTHER" id="PTHR36112:SF1">
    <property type="entry name" value="RIBOSOMAL RNA SMALL SUBUNIT METHYLTRANSFERASE J"/>
    <property type="match status" value="1"/>
</dbReference>
<dbReference type="Pfam" id="PF04445">
    <property type="entry name" value="SAM_MT"/>
    <property type="match status" value="1"/>
</dbReference>
<dbReference type="SUPFAM" id="SSF53335">
    <property type="entry name" value="S-adenosyl-L-methionine-dependent methyltransferases"/>
    <property type="match status" value="1"/>
</dbReference>
<proteinExistence type="inferred from homology"/>
<gene>
    <name evidence="1" type="primary">rsmJ</name>
    <name type="ordered locus">Shewana3_4037</name>
</gene>